<dbReference type="EC" id="3.1.3.48"/>
<dbReference type="EMBL" id="BC133386">
    <property type="protein sequence ID" value="AAI33387.1"/>
    <property type="molecule type" value="mRNA"/>
</dbReference>
<dbReference type="RefSeq" id="NP_001077235.1">
    <property type="nucleotide sequence ID" value="NM_001083766.1"/>
</dbReference>
<dbReference type="RefSeq" id="XP_005215180.1">
    <property type="nucleotide sequence ID" value="XM_005215123.5"/>
</dbReference>
<dbReference type="RefSeq" id="XP_005215181.1">
    <property type="nucleotide sequence ID" value="XM_005215124.5"/>
</dbReference>
<dbReference type="RefSeq" id="XP_010810118.1">
    <property type="nucleotide sequence ID" value="XM_010811816.4"/>
</dbReference>
<dbReference type="RefSeq" id="XP_015329814.1">
    <property type="nucleotide sequence ID" value="XM_015474328.2"/>
</dbReference>
<dbReference type="RefSeq" id="XP_024857165.1">
    <property type="nucleotide sequence ID" value="XM_025001397.2"/>
</dbReference>
<dbReference type="RefSeq" id="XP_024857166.1">
    <property type="nucleotide sequence ID" value="XM_025001398.2"/>
</dbReference>
<dbReference type="SMR" id="A2VDT1"/>
<dbReference type="FunCoup" id="A2VDT1">
    <property type="interactions" value="467"/>
</dbReference>
<dbReference type="STRING" id="9913.ENSBTAP00000056717"/>
<dbReference type="PaxDb" id="9913-ENSBTAP00000056281"/>
<dbReference type="Ensembl" id="ENSBTAT00000064455.3">
    <property type="protein sequence ID" value="ENSBTAP00000056281.1"/>
    <property type="gene ID" value="ENSBTAG00000046467.3"/>
</dbReference>
<dbReference type="GeneID" id="100137722"/>
<dbReference type="KEGG" id="bta:100137722"/>
<dbReference type="CTD" id="11156"/>
<dbReference type="VEuPathDB" id="HostDB:ENSBTAG00000046467"/>
<dbReference type="VGNC" id="VGNC:33525">
    <property type="gene designation" value="PTP4A3"/>
</dbReference>
<dbReference type="eggNOG" id="KOG2836">
    <property type="taxonomic scope" value="Eukaryota"/>
</dbReference>
<dbReference type="GeneTree" id="ENSGT00940000159581"/>
<dbReference type="HOGENOM" id="CLU_099263_1_0_1"/>
<dbReference type="InParanoid" id="A2VDT1"/>
<dbReference type="OMA" id="GIEVHSW"/>
<dbReference type="OrthoDB" id="5632at2759"/>
<dbReference type="TreeFam" id="TF313384"/>
<dbReference type="Proteomes" id="UP000009136">
    <property type="component" value="Chromosome 14"/>
</dbReference>
<dbReference type="Bgee" id="ENSBTAG00000046467">
    <property type="expression patterns" value="Expressed in infraspinatus muscle and 103 other cell types or tissues"/>
</dbReference>
<dbReference type="GO" id="GO:0005737">
    <property type="term" value="C:cytoplasm"/>
    <property type="evidence" value="ECO:0000318"/>
    <property type="project" value="GO_Central"/>
</dbReference>
<dbReference type="GO" id="GO:0005769">
    <property type="term" value="C:early endosome"/>
    <property type="evidence" value="ECO:0007669"/>
    <property type="project" value="UniProtKB-SubCell"/>
</dbReference>
<dbReference type="GO" id="GO:0005634">
    <property type="term" value="C:nucleus"/>
    <property type="evidence" value="ECO:0000318"/>
    <property type="project" value="GO_Central"/>
</dbReference>
<dbReference type="GO" id="GO:0005886">
    <property type="term" value="C:plasma membrane"/>
    <property type="evidence" value="ECO:0007669"/>
    <property type="project" value="UniProtKB-SubCell"/>
</dbReference>
<dbReference type="GO" id="GO:0004725">
    <property type="term" value="F:protein tyrosine phosphatase activity"/>
    <property type="evidence" value="ECO:0000318"/>
    <property type="project" value="GO_Central"/>
</dbReference>
<dbReference type="GO" id="GO:1990830">
    <property type="term" value="P:cellular response to leukemia inhibitory factor"/>
    <property type="evidence" value="ECO:0007669"/>
    <property type="project" value="Ensembl"/>
</dbReference>
<dbReference type="GO" id="GO:0043542">
    <property type="term" value="P:endothelial cell migration"/>
    <property type="evidence" value="ECO:0000318"/>
    <property type="project" value="GO_Central"/>
</dbReference>
<dbReference type="GO" id="GO:0007219">
    <property type="term" value="P:Notch signaling pathway"/>
    <property type="evidence" value="ECO:0007669"/>
    <property type="project" value="Ensembl"/>
</dbReference>
<dbReference type="GO" id="GO:1904951">
    <property type="term" value="P:positive regulation of establishment of protein localization"/>
    <property type="evidence" value="ECO:0007669"/>
    <property type="project" value="Ensembl"/>
</dbReference>
<dbReference type="GO" id="GO:1901224">
    <property type="term" value="P:positive regulation of non-canonical NF-kappaB signal transduction"/>
    <property type="evidence" value="ECO:0007669"/>
    <property type="project" value="Ensembl"/>
</dbReference>
<dbReference type="GO" id="GO:0043117">
    <property type="term" value="P:positive regulation of vascular permeability"/>
    <property type="evidence" value="ECO:0007669"/>
    <property type="project" value="Ensembl"/>
</dbReference>
<dbReference type="GO" id="GO:0006355">
    <property type="term" value="P:regulation of DNA-templated transcription"/>
    <property type="evidence" value="ECO:0007669"/>
    <property type="project" value="Ensembl"/>
</dbReference>
<dbReference type="GO" id="GO:1900746">
    <property type="term" value="P:regulation of vascular endothelial growth factor signaling pathway"/>
    <property type="evidence" value="ECO:0007669"/>
    <property type="project" value="Ensembl"/>
</dbReference>
<dbReference type="FunFam" id="3.90.190.10:FF:000105">
    <property type="entry name" value="Protein tyrosine phosphatase type IVA 3"/>
    <property type="match status" value="1"/>
</dbReference>
<dbReference type="Gene3D" id="3.90.190.10">
    <property type="entry name" value="Protein tyrosine phosphatase superfamily"/>
    <property type="match status" value="1"/>
</dbReference>
<dbReference type="InterPro" id="IPR029021">
    <property type="entry name" value="Prot-tyrosine_phosphatase-like"/>
</dbReference>
<dbReference type="InterPro" id="IPR050561">
    <property type="entry name" value="PTP"/>
</dbReference>
<dbReference type="InterPro" id="IPR003595">
    <property type="entry name" value="Tyr_Pase_cat"/>
</dbReference>
<dbReference type="InterPro" id="IPR000387">
    <property type="entry name" value="Tyr_Pase_dom"/>
</dbReference>
<dbReference type="InterPro" id="IPR020422">
    <property type="entry name" value="TYR_PHOSPHATASE_DUAL_dom"/>
</dbReference>
<dbReference type="PANTHER" id="PTHR23339">
    <property type="entry name" value="TYROSINE SPECIFIC PROTEIN PHOSPHATASE AND DUAL SPECIFICITY PROTEIN PHOSPHATASE"/>
    <property type="match status" value="1"/>
</dbReference>
<dbReference type="Pfam" id="PF22785">
    <property type="entry name" value="Tc-R-P"/>
    <property type="match status" value="1"/>
</dbReference>
<dbReference type="SMART" id="SM00404">
    <property type="entry name" value="PTPc_motif"/>
    <property type="match status" value="1"/>
</dbReference>
<dbReference type="SUPFAM" id="SSF52799">
    <property type="entry name" value="(Phosphotyrosine protein) phosphatases II"/>
    <property type="match status" value="1"/>
</dbReference>
<dbReference type="PROSITE" id="PS50056">
    <property type="entry name" value="TYR_PHOSPHATASE_2"/>
    <property type="match status" value="1"/>
</dbReference>
<dbReference type="PROSITE" id="PS50054">
    <property type="entry name" value="TYR_PHOSPHATASE_DUAL"/>
    <property type="match status" value="1"/>
</dbReference>
<keyword id="KW-1003">Cell membrane</keyword>
<keyword id="KW-1015">Disulfide bond</keyword>
<keyword id="KW-0967">Endosome</keyword>
<keyword id="KW-0378">Hydrolase</keyword>
<keyword id="KW-0449">Lipoprotein</keyword>
<keyword id="KW-0472">Membrane</keyword>
<keyword id="KW-0488">Methylation</keyword>
<keyword id="KW-0636">Prenylation</keyword>
<keyword id="KW-0904">Protein phosphatase</keyword>
<keyword id="KW-0656">Proto-oncogene</keyword>
<keyword id="KW-1185">Reference proteome</keyword>
<comment type="function">
    <text evidence="1">Protein tyrosine phosphatase which stimulates progression from G1 into S phase during mitosis. Enhances cell proliferation, cell motility and invasive activity, and promotes cancer metastasis. May be involved in the progression of cardiac hypertrophy by inhibiting intracellular calcium mobilization in response to angiotensin II (By similarity).</text>
</comment>
<comment type="catalytic activity">
    <reaction>
        <text>O-phospho-L-tyrosyl-[protein] + H2O = L-tyrosyl-[protein] + phosphate</text>
        <dbReference type="Rhea" id="RHEA:10684"/>
        <dbReference type="Rhea" id="RHEA-COMP:10136"/>
        <dbReference type="Rhea" id="RHEA-COMP:20101"/>
        <dbReference type="ChEBI" id="CHEBI:15377"/>
        <dbReference type="ChEBI" id="CHEBI:43474"/>
        <dbReference type="ChEBI" id="CHEBI:46858"/>
        <dbReference type="ChEBI" id="CHEBI:61978"/>
        <dbReference type="EC" id="3.1.3.48"/>
    </reaction>
</comment>
<comment type="activity regulation">
    <text evidence="1">Inhibited by sodium orthovanadate and peroxovanadium compounds, and by pentamidine.</text>
</comment>
<comment type="subunit">
    <text evidence="1">Interacts with tubulin.</text>
</comment>
<comment type="subcellular location">
    <subcellularLocation>
        <location>Cell membrane</location>
    </subcellularLocation>
    <subcellularLocation>
        <location evidence="1">Early endosome</location>
    </subcellularLocation>
</comment>
<comment type="PTM">
    <text evidence="1">Farnesylated. Farnesylation is required for membrane targeting. Unfarnesylated forms are shifted into the nucleus (By similarity).</text>
</comment>
<comment type="similarity">
    <text evidence="3">Belongs to the protein-tyrosine phosphatase family.</text>
</comment>
<protein>
    <recommendedName>
        <fullName>Protein tyrosine phosphatase type IVA 3</fullName>
        <ecNumber>3.1.3.48</ecNumber>
    </recommendedName>
    <alternativeName>
        <fullName>Protein-tyrosine phosphatase 4a3</fullName>
    </alternativeName>
</protein>
<feature type="chain" id="PRO_0000329024" description="Protein tyrosine phosphatase type IVA 3">
    <location>
        <begin position="1"/>
        <end position="170"/>
    </location>
</feature>
<feature type="propeptide" id="PRO_0000396734" description="Removed in mature form" evidence="1">
    <location>
        <begin position="171"/>
        <end position="173"/>
    </location>
</feature>
<feature type="domain" description="Tyrosine-protein phosphatase" evidence="2">
    <location>
        <begin position="8"/>
        <end position="161"/>
    </location>
</feature>
<feature type="active site" description="Proton donor" evidence="1">
    <location>
        <position position="72"/>
    </location>
</feature>
<feature type="active site" description="Phosphocysteine intermediate" evidence="2">
    <location>
        <position position="104"/>
    </location>
</feature>
<feature type="binding site" evidence="1">
    <location>
        <position position="110"/>
    </location>
    <ligand>
        <name>substrate</name>
    </ligand>
</feature>
<feature type="modified residue" description="Cysteine methyl ester" evidence="1">
    <location>
        <position position="170"/>
    </location>
</feature>
<feature type="lipid moiety-binding region" description="S-farnesyl cysteine" evidence="1">
    <location>
        <position position="170"/>
    </location>
</feature>
<feature type="disulfide bond" evidence="1">
    <location>
        <begin position="49"/>
        <end position="104"/>
    </location>
</feature>
<accession>A2VDT1</accession>
<gene>
    <name type="primary">PTP4A3</name>
</gene>
<evidence type="ECO:0000250" key="1"/>
<evidence type="ECO:0000255" key="2">
    <source>
        <dbReference type="PROSITE-ProRule" id="PRU00160"/>
    </source>
</evidence>
<evidence type="ECO:0000305" key="3"/>
<proteinExistence type="evidence at transcript level"/>
<reference key="1">
    <citation type="submission" date="2007-02" db="EMBL/GenBank/DDBJ databases">
        <authorList>
            <consortium name="NIH - Mammalian Gene Collection (MGC) project"/>
        </authorList>
    </citation>
    <scope>NUCLEOTIDE SEQUENCE [LARGE SCALE MRNA]</scope>
    <source>
        <strain>Hereford</strain>
        <tissue>Fetal muscle</tissue>
    </source>
</reference>
<sequence>MARMNRPAPVEVSYKNMRFLITHNPTNATLSSFIEDLKKYGATTVVRVCEVTYDKAPLEKDGITVVDWPFDDGAPPPGKVVEDWLSLLKNKFCDDPGSCVAVHCVAGLGRAPVLVALALIESGMKYEDAIQFIRQKRRGAINSKQLTYLEKYRPKQRLRFKDPHAHKTKCCIM</sequence>
<name>TP4A3_BOVIN</name>
<organism>
    <name type="scientific">Bos taurus</name>
    <name type="common">Bovine</name>
    <dbReference type="NCBI Taxonomy" id="9913"/>
    <lineage>
        <taxon>Eukaryota</taxon>
        <taxon>Metazoa</taxon>
        <taxon>Chordata</taxon>
        <taxon>Craniata</taxon>
        <taxon>Vertebrata</taxon>
        <taxon>Euteleostomi</taxon>
        <taxon>Mammalia</taxon>
        <taxon>Eutheria</taxon>
        <taxon>Laurasiatheria</taxon>
        <taxon>Artiodactyla</taxon>
        <taxon>Ruminantia</taxon>
        <taxon>Pecora</taxon>
        <taxon>Bovidae</taxon>
        <taxon>Bovinae</taxon>
        <taxon>Bos</taxon>
    </lineage>
</organism>